<name>TXND5_HUMAN</name>
<proteinExistence type="evidence at protein level"/>
<protein>
    <recommendedName>
        <fullName evidence="1">Thioredoxin domain-containing protein 5</fullName>
        <ecNumber evidence="1">1.8.4.-</ecNumber>
        <ecNumber evidence="1">5.3.4.1</ecNumber>
    </recommendedName>
    <alternativeName>
        <fullName evidence="1">Endoplasmic reticulum resident protein 46</fullName>
        <shortName evidence="1">ER protein 46</shortName>
        <shortName evidence="1">ERp46</shortName>
    </alternativeName>
    <alternativeName>
        <fullName>Thioredoxin-like protein p46</fullName>
    </alternativeName>
</protein>
<reference key="1">
    <citation type="journal article" date="2003" name="Genome Res.">
        <title>The secreted protein discovery initiative (SPDI), a large-scale effort to identify novel human secreted and transmembrane proteins: a bioinformatics assessment.</title>
        <authorList>
            <person name="Clark H.F."/>
            <person name="Gurney A.L."/>
            <person name="Abaya E."/>
            <person name="Baker K."/>
            <person name="Baldwin D.T."/>
            <person name="Brush J."/>
            <person name="Chen J."/>
            <person name="Chow B."/>
            <person name="Chui C."/>
            <person name="Crowley C."/>
            <person name="Currell B."/>
            <person name="Deuel B."/>
            <person name="Dowd P."/>
            <person name="Eaton D."/>
            <person name="Foster J.S."/>
            <person name="Grimaldi C."/>
            <person name="Gu Q."/>
            <person name="Hass P.E."/>
            <person name="Heldens S."/>
            <person name="Huang A."/>
            <person name="Kim H.S."/>
            <person name="Klimowski L."/>
            <person name="Jin Y."/>
            <person name="Johnson S."/>
            <person name="Lee J."/>
            <person name="Lewis L."/>
            <person name="Liao D."/>
            <person name="Mark M.R."/>
            <person name="Robbie E."/>
            <person name="Sanchez C."/>
            <person name="Schoenfeld J."/>
            <person name="Seshagiri S."/>
            <person name="Simmons L."/>
            <person name="Singh J."/>
            <person name="Smith V."/>
            <person name="Stinson J."/>
            <person name="Vagts A."/>
            <person name="Vandlen R.L."/>
            <person name="Watanabe C."/>
            <person name="Wieand D."/>
            <person name="Woods K."/>
            <person name="Xie M.-H."/>
            <person name="Yansura D.G."/>
            <person name="Yi S."/>
            <person name="Yu G."/>
            <person name="Yuan J."/>
            <person name="Zhang M."/>
            <person name="Zhang Z."/>
            <person name="Goddard A.D."/>
            <person name="Wood W.I."/>
            <person name="Godowski P.J."/>
            <person name="Gray A.M."/>
        </authorList>
    </citation>
    <scope>NUCLEOTIDE SEQUENCE [LARGE SCALE MRNA] (ISOFORM 1)</scope>
</reference>
<reference key="2">
    <citation type="journal article" date="2004" name="Nat. Genet.">
        <title>Complete sequencing and characterization of 21,243 full-length human cDNAs.</title>
        <authorList>
            <person name="Ota T."/>
            <person name="Suzuki Y."/>
            <person name="Nishikawa T."/>
            <person name="Otsuki T."/>
            <person name="Sugiyama T."/>
            <person name="Irie R."/>
            <person name="Wakamatsu A."/>
            <person name="Hayashi K."/>
            <person name="Sato H."/>
            <person name="Nagai K."/>
            <person name="Kimura K."/>
            <person name="Makita H."/>
            <person name="Sekine M."/>
            <person name="Obayashi M."/>
            <person name="Nishi T."/>
            <person name="Shibahara T."/>
            <person name="Tanaka T."/>
            <person name="Ishii S."/>
            <person name="Yamamoto J."/>
            <person name="Saito K."/>
            <person name="Kawai Y."/>
            <person name="Isono Y."/>
            <person name="Nakamura Y."/>
            <person name="Nagahari K."/>
            <person name="Murakami K."/>
            <person name="Yasuda T."/>
            <person name="Iwayanagi T."/>
            <person name="Wagatsuma M."/>
            <person name="Shiratori A."/>
            <person name="Sudo H."/>
            <person name="Hosoiri T."/>
            <person name="Kaku Y."/>
            <person name="Kodaira H."/>
            <person name="Kondo H."/>
            <person name="Sugawara M."/>
            <person name="Takahashi M."/>
            <person name="Kanda K."/>
            <person name="Yokoi T."/>
            <person name="Furuya T."/>
            <person name="Kikkawa E."/>
            <person name="Omura Y."/>
            <person name="Abe K."/>
            <person name="Kamihara K."/>
            <person name="Katsuta N."/>
            <person name="Sato K."/>
            <person name="Tanikawa M."/>
            <person name="Yamazaki M."/>
            <person name="Ninomiya K."/>
            <person name="Ishibashi T."/>
            <person name="Yamashita H."/>
            <person name="Murakawa K."/>
            <person name="Fujimori K."/>
            <person name="Tanai H."/>
            <person name="Kimata M."/>
            <person name="Watanabe M."/>
            <person name="Hiraoka S."/>
            <person name="Chiba Y."/>
            <person name="Ishida S."/>
            <person name="Ono Y."/>
            <person name="Takiguchi S."/>
            <person name="Watanabe S."/>
            <person name="Yosida M."/>
            <person name="Hotuta T."/>
            <person name="Kusano J."/>
            <person name="Kanehori K."/>
            <person name="Takahashi-Fujii A."/>
            <person name="Hara H."/>
            <person name="Tanase T.-O."/>
            <person name="Nomura Y."/>
            <person name="Togiya S."/>
            <person name="Komai F."/>
            <person name="Hara R."/>
            <person name="Takeuchi K."/>
            <person name="Arita M."/>
            <person name="Imose N."/>
            <person name="Musashino K."/>
            <person name="Yuuki H."/>
            <person name="Oshima A."/>
            <person name="Sasaki N."/>
            <person name="Aotsuka S."/>
            <person name="Yoshikawa Y."/>
            <person name="Matsunawa H."/>
            <person name="Ichihara T."/>
            <person name="Shiohata N."/>
            <person name="Sano S."/>
            <person name="Moriya S."/>
            <person name="Momiyama H."/>
            <person name="Satoh N."/>
            <person name="Takami S."/>
            <person name="Terashima Y."/>
            <person name="Suzuki O."/>
            <person name="Nakagawa S."/>
            <person name="Senoh A."/>
            <person name="Mizoguchi H."/>
            <person name="Goto Y."/>
            <person name="Shimizu F."/>
            <person name="Wakebe H."/>
            <person name="Hishigaki H."/>
            <person name="Watanabe T."/>
            <person name="Sugiyama A."/>
            <person name="Takemoto M."/>
            <person name="Kawakami B."/>
            <person name="Yamazaki M."/>
            <person name="Watanabe K."/>
            <person name="Kumagai A."/>
            <person name="Itakura S."/>
            <person name="Fukuzumi Y."/>
            <person name="Fujimori Y."/>
            <person name="Komiyama M."/>
            <person name="Tashiro H."/>
            <person name="Tanigami A."/>
            <person name="Fujiwara T."/>
            <person name="Ono T."/>
            <person name="Yamada K."/>
            <person name="Fujii Y."/>
            <person name="Ozaki K."/>
            <person name="Hirao M."/>
            <person name="Ohmori Y."/>
            <person name="Kawabata A."/>
            <person name="Hikiji T."/>
            <person name="Kobatake N."/>
            <person name="Inagaki H."/>
            <person name="Ikema Y."/>
            <person name="Okamoto S."/>
            <person name="Okitani R."/>
            <person name="Kawakami T."/>
            <person name="Noguchi S."/>
            <person name="Itoh T."/>
            <person name="Shigeta K."/>
            <person name="Senba T."/>
            <person name="Matsumura K."/>
            <person name="Nakajima Y."/>
            <person name="Mizuno T."/>
            <person name="Morinaga M."/>
            <person name="Sasaki M."/>
            <person name="Togashi T."/>
            <person name="Oyama M."/>
            <person name="Hata H."/>
            <person name="Watanabe M."/>
            <person name="Komatsu T."/>
            <person name="Mizushima-Sugano J."/>
            <person name="Satoh T."/>
            <person name="Shirai Y."/>
            <person name="Takahashi Y."/>
            <person name="Nakagawa K."/>
            <person name="Okumura K."/>
            <person name="Nagase T."/>
            <person name="Nomura N."/>
            <person name="Kikuchi H."/>
            <person name="Masuho Y."/>
            <person name="Yamashita R."/>
            <person name="Nakai K."/>
            <person name="Yada T."/>
            <person name="Nakamura Y."/>
            <person name="Ohara O."/>
            <person name="Isogai T."/>
            <person name="Sugano S."/>
        </authorList>
    </citation>
    <scope>NUCLEOTIDE SEQUENCE [LARGE SCALE MRNA] (ISOFORMS 1 AND 2)</scope>
    <source>
        <tissue>Lung</tissue>
    </source>
</reference>
<reference key="3">
    <citation type="journal article" date="2003" name="Nature">
        <title>The DNA sequence and analysis of human chromosome 6.</title>
        <authorList>
            <person name="Mungall A.J."/>
            <person name="Palmer S.A."/>
            <person name="Sims S.K."/>
            <person name="Edwards C.A."/>
            <person name="Ashurst J.L."/>
            <person name="Wilming L."/>
            <person name="Jones M.C."/>
            <person name="Horton R."/>
            <person name="Hunt S.E."/>
            <person name="Scott C.E."/>
            <person name="Gilbert J.G.R."/>
            <person name="Clamp M.E."/>
            <person name="Bethel G."/>
            <person name="Milne S."/>
            <person name="Ainscough R."/>
            <person name="Almeida J.P."/>
            <person name="Ambrose K.D."/>
            <person name="Andrews T.D."/>
            <person name="Ashwell R.I.S."/>
            <person name="Babbage A.K."/>
            <person name="Bagguley C.L."/>
            <person name="Bailey J."/>
            <person name="Banerjee R."/>
            <person name="Barker D.J."/>
            <person name="Barlow K.F."/>
            <person name="Bates K."/>
            <person name="Beare D.M."/>
            <person name="Beasley H."/>
            <person name="Beasley O."/>
            <person name="Bird C.P."/>
            <person name="Blakey S.E."/>
            <person name="Bray-Allen S."/>
            <person name="Brook J."/>
            <person name="Brown A.J."/>
            <person name="Brown J.Y."/>
            <person name="Burford D.C."/>
            <person name="Burrill W."/>
            <person name="Burton J."/>
            <person name="Carder C."/>
            <person name="Carter N.P."/>
            <person name="Chapman J.C."/>
            <person name="Clark S.Y."/>
            <person name="Clark G."/>
            <person name="Clee C.M."/>
            <person name="Clegg S."/>
            <person name="Cobley V."/>
            <person name="Collier R.E."/>
            <person name="Collins J.E."/>
            <person name="Colman L.K."/>
            <person name="Corby N.R."/>
            <person name="Coville G.J."/>
            <person name="Culley K.M."/>
            <person name="Dhami P."/>
            <person name="Davies J."/>
            <person name="Dunn M."/>
            <person name="Earthrowl M.E."/>
            <person name="Ellington A.E."/>
            <person name="Evans K.A."/>
            <person name="Faulkner L."/>
            <person name="Francis M.D."/>
            <person name="Frankish A."/>
            <person name="Frankland J."/>
            <person name="French L."/>
            <person name="Garner P."/>
            <person name="Garnett J."/>
            <person name="Ghori M.J."/>
            <person name="Gilby L.M."/>
            <person name="Gillson C.J."/>
            <person name="Glithero R.J."/>
            <person name="Grafham D.V."/>
            <person name="Grant M."/>
            <person name="Gribble S."/>
            <person name="Griffiths C."/>
            <person name="Griffiths M.N.D."/>
            <person name="Hall R."/>
            <person name="Halls K.S."/>
            <person name="Hammond S."/>
            <person name="Harley J.L."/>
            <person name="Hart E.A."/>
            <person name="Heath P.D."/>
            <person name="Heathcott R."/>
            <person name="Holmes S.J."/>
            <person name="Howden P.J."/>
            <person name="Howe K.L."/>
            <person name="Howell G.R."/>
            <person name="Huckle E."/>
            <person name="Humphray S.J."/>
            <person name="Humphries M.D."/>
            <person name="Hunt A.R."/>
            <person name="Johnson C.M."/>
            <person name="Joy A.A."/>
            <person name="Kay M."/>
            <person name="Keenan S.J."/>
            <person name="Kimberley A.M."/>
            <person name="King A."/>
            <person name="Laird G.K."/>
            <person name="Langford C."/>
            <person name="Lawlor S."/>
            <person name="Leongamornlert D.A."/>
            <person name="Leversha M."/>
            <person name="Lloyd C.R."/>
            <person name="Lloyd D.M."/>
            <person name="Loveland J.E."/>
            <person name="Lovell J."/>
            <person name="Martin S."/>
            <person name="Mashreghi-Mohammadi M."/>
            <person name="Maslen G.L."/>
            <person name="Matthews L."/>
            <person name="McCann O.T."/>
            <person name="McLaren S.J."/>
            <person name="McLay K."/>
            <person name="McMurray A."/>
            <person name="Moore M.J.F."/>
            <person name="Mullikin J.C."/>
            <person name="Niblett D."/>
            <person name="Nickerson T."/>
            <person name="Novik K.L."/>
            <person name="Oliver K."/>
            <person name="Overton-Larty E.K."/>
            <person name="Parker A."/>
            <person name="Patel R."/>
            <person name="Pearce A.V."/>
            <person name="Peck A.I."/>
            <person name="Phillimore B.J.C.T."/>
            <person name="Phillips S."/>
            <person name="Plumb R.W."/>
            <person name="Porter K.M."/>
            <person name="Ramsey Y."/>
            <person name="Ranby S.A."/>
            <person name="Rice C.M."/>
            <person name="Ross M.T."/>
            <person name="Searle S.M."/>
            <person name="Sehra H.K."/>
            <person name="Sheridan E."/>
            <person name="Skuce C.D."/>
            <person name="Smith S."/>
            <person name="Smith M."/>
            <person name="Spraggon L."/>
            <person name="Squares S.L."/>
            <person name="Steward C.A."/>
            <person name="Sycamore N."/>
            <person name="Tamlyn-Hall G."/>
            <person name="Tester J."/>
            <person name="Theaker A.J."/>
            <person name="Thomas D.W."/>
            <person name="Thorpe A."/>
            <person name="Tracey A."/>
            <person name="Tromans A."/>
            <person name="Tubby B."/>
            <person name="Wall M."/>
            <person name="Wallis J.M."/>
            <person name="West A.P."/>
            <person name="White S.S."/>
            <person name="Whitehead S.L."/>
            <person name="Whittaker H."/>
            <person name="Wild A."/>
            <person name="Willey D.J."/>
            <person name="Wilmer T.E."/>
            <person name="Wood J.M."/>
            <person name="Wray P.W."/>
            <person name="Wyatt J.C."/>
            <person name="Young L."/>
            <person name="Younger R.M."/>
            <person name="Bentley D.R."/>
            <person name="Coulson A."/>
            <person name="Durbin R.M."/>
            <person name="Hubbard T."/>
            <person name="Sulston J.E."/>
            <person name="Dunham I."/>
            <person name="Rogers J."/>
            <person name="Beck S."/>
        </authorList>
    </citation>
    <scope>NUCLEOTIDE SEQUENCE [LARGE SCALE GENOMIC DNA]</scope>
</reference>
<reference key="4">
    <citation type="submission" date="2005-07" db="EMBL/GenBank/DDBJ databases">
        <authorList>
            <person name="Mural R.J."/>
            <person name="Istrail S."/>
            <person name="Sutton G.G."/>
            <person name="Florea L."/>
            <person name="Halpern A.L."/>
            <person name="Mobarry C.M."/>
            <person name="Lippert R."/>
            <person name="Walenz B."/>
            <person name="Shatkay H."/>
            <person name="Dew I."/>
            <person name="Miller J.R."/>
            <person name="Flanigan M.J."/>
            <person name="Edwards N.J."/>
            <person name="Bolanos R."/>
            <person name="Fasulo D."/>
            <person name="Halldorsson B.V."/>
            <person name="Hannenhalli S."/>
            <person name="Turner R."/>
            <person name="Yooseph S."/>
            <person name="Lu F."/>
            <person name="Nusskern D.R."/>
            <person name="Shue B.C."/>
            <person name="Zheng X.H."/>
            <person name="Zhong F."/>
            <person name="Delcher A.L."/>
            <person name="Huson D.H."/>
            <person name="Kravitz S.A."/>
            <person name="Mouchard L."/>
            <person name="Reinert K."/>
            <person name="Remington K.A."/>
            <person name="Clark A.G."/>
            <person name="Waterman M.S."/>
            <person name="Eichler E.E."/>
            <person name="Adams M.D."/>
            <person name="Hunkapiller M.W."/>
            <person name="Myers E.W."/>
            <person name="Venter J.C."/>
        </authorList>
    </citation>
    <scope>NUCLEOTIDE SEQUENCE [LARGE SCALE GENOMIC DNA]</scope>
</reference>
<reference key="5">
    <citation type="submission" date="2002-04" db="EMBL/GenBank/DDBJ databases">
        <authorList>
            <person name="Lo S.L."/>
            <person name="Nissom P.M."/>
            <person name="Ong S.E."/>
            <person name="Choong M.L."/>
            <person name="Ng S.S."/>
            <person name="Lim J.W.E."/>
            <person name="Liang R.C.M.Y."/>
            <person name="Ou K."/>
            <person name="Seow T.K."/>
            <person name="Chung M.C.M."/>
        </authorList>
    </citation>
    <scope>NUCLEOTIDE SEQUENCE [MRNA] OF 70-432 (ISOFORM 1)</scope>
    <source>
        <tissue>Liver</tissue>
    </source>
</reference>
<reference key="6">
    <citation type="journal article" date="2004" name="Genome Res.">
        <title>The status, quality, and expansion of the NIH full-length cDNA project: the Mammalian Gene Collection (MGC).</title>
        <authorList>
            <consortium name="The MGC Project Team"/>
        </authorList>
    </citation>
    <scope>NUCLEOTIDE SEQUENCE [LARGE SCALE MRNA] OF 82-432 (ISOFORM 1)</scope>
    <source>
        <tissue>Eye</tissue>
    </source>
</reference>
<reference key="7">
    <citation type="journal article" date="2007" name="BMC Genomics">
        <title>The full-ORF clone resource of the German cDNA consortium.</title>
        <authorList>
            <person name="Bechtel S."/>
            <person name="Rosenfelder H."/>
            <person name="Duda A."/>
            <person name="Schmidt C.P."/>
            <person name="Ernst U."/>
            <person name="Wellenreuther R."/>
            <person name="Mehrle A."/>
            <person name="Schuster C."/>
            <person name="Bahr A."/>
            <person name="Bloecker H."/>
            <person name="Heubner D."/>
            <person name="Hoerlein A."/>
            <person name="Michel G."/>
            <person name="Wedler H."/>
            <person name="Koehrer K."/>
            <person name="Ottenwaelder B."/>
            <person name="Poustka A."/>
            <person name="Wiemann S."/>
            <person name="Schupp I."/>
        </authorList>
    </citation>
    <scope>NUCLEOTIDE SEQUENCE [LARGE SCALE MRNA] OF 189-432 (ISOFORMS 1/2)</scope>
    <source>
        <tissue>Lymph node</tissue>
    </source>
</reference>
<reference key="8">
    <citation type="journal article" date="2011" name="BMC Syst. Biol.">
        <title>Initial characterization of the human central proteome.</title>
        <authorList>
            <person name="Burkard T.R."/>
            <person name="Planyavsky M."/>
            <person name="Kaupe I."/>
            <person name="Breitwieser F.P."/>
            <person name="Buerckstuemmer T."/>
            <person name="Bennett K.L."/>
            <person name="Superti-Furga G."/>
            <person name="Colinge J."/>
        </authorList>
    </citation>
    <scope>IDENTIFICATION BY MASS SPECTROMETRY [LARGE SCALE ANALYSIS]</scope>
</reference>
<reference key="9">
    <citation type="journal article" date="2014" name="J. Proteomics">
        <title>An enzyme assisted RP-RPLC approach for in-depth analysis of human liver phosphoproteome.</title>
        <authorList>
            <person name="Bian Y."/>
            <person name="Song C."/>
            <person name="Cheng K."/>
            <person name="Dong M."/>
            <person name="Wang F."/>
            <person name="Huang J."/>
            <person name="Sun D."/>
            <person name="Wang L."/>
            <person name="Ye M."/>
            <person name="Zou H."/>
        </authorList>
    </citation>
    <scope>IDENTIFICATION BY MASS SPECTROMETRY [LARGE SCALE ANALYSIS]</scope>
    <source>
        <tissue>Liver</tissue>
    </source>
</reference>
<reference key="10">
    <citation type="journal article" date="2015" name="Proteomics">
        <title>N-terminome analysis of the human mitochondrial proteome.</title>
        <authorList>
            <person name="Vaca Jacome A.S."/>
            <person name="Rabilloud T."/>
            <person name="Schaeffer-Reiss C."/>
            <person name="Rompais M."/>
            <person name="Ayoub D."/>
            <person name="Lane L."/>
            <person name="Bairoch A."/>
            <person name="Van Dorsselaer A."/>
            <person name="Carapito C."/>
        </authorList>
    </citation>
    <scope>IDENTIFICATION BY MASS SPECTROMETRY [LARGE SCALE ANALYSIS]</scope>
</reference>
<reference key="11">
    <citation type="submission" date="2006-09" db="PDB data bank">
        <title>The solution structure of the third thioredoxin domain of human thioredoxin domain-containing protein 5.</title>
        <authorList>
            <consortium name="RIKEN structural genomics initiative (RSGI)"/>
        </authorList>
    </citation>
    <scope>STRUCTURE BY NMR OF 322-432</scope>
</reference>
<organism>
    <name type="scientific">Homo sapiens</name>
    <name type="common">Human</name>
    <dbReference type="NCBI Taxonomy" id="9606"/>
    <lineage>
        <taxon>Eukaryota</taxon>
        <taxon>Metazoa</taxon>
        <taxon>Chordata</taxon>
        <taxon>Craniata</taxon>
        <taxon>Vertebrata</taxon>
        <taxon>Euteleostomi</taxon>
        <taxon>Mammalia</taxon>
        <taxon>Eutheria</taxon>
        <taxon>Euarchontoglires</taxon>
        <taxon>Primates</taxon>
        <taxon>Haplorrhini</taxon>
        <taxon>Catarrhini</taxon>
        <taxon>Hominidae</taxon>
        <taxon>Homo</taxon>
    </lineage>
</organism>
<accession>Q8NBS9</accession>
<accession>B2RDM2</accession>
<accession>Q5TCQ0</accession>
<accession>Q8ND33</accession>
<accession>Q8TCT2</accession>
<accession>Q9BVH9</accession>
<keyword id="KW-0002">3D-structure</keyword>
<keyword id="KW-0025">Alternative splicing</keyword>
<keyword id="KW-1015">Disulfide bond</keyword>
<keyword id="KW-0256">Endoplasmic reticulum</keyword>
<keyword id="KW-0413">Isomerase</keyword>
<keyword id="KW-0560">Oxidoreductase</keyword>
<keyword id="KW-1267">Proteomics identification</keyword>
<keyword id="KW-0676">Redox-active center</keyword>
<keyword id="KW-1185">Reference proteome</keyword>
<keyword id="KW-0677">Repeat</keyword>
<keyword id="KW-0732">Signal</keyword>
<sequence length="432" mass="47629">MPARPGRLLPLLARPAALTALLLLLLGHGGGGRWGARAQEAAAAAADGPPAADGEDGQDPHSKHLYTADMFTHGIQSAAHFVMFFAPWCGHCQRLQPTWNDLGDKYNSMEDAKVYVAKVDCTAHSDVCSAQGVRGYPTLKLFKPGQEAVKYQGPRDFQTLENWMLQTLNEEPVTPEPEVEPPSAPELKQGLYELSASNFELHVAQGDHFIKFFAPWCGHCKALAPTWEQLALGLEHSETVKIGKVDCTQHYELCSGNQVRGYPTLLWFRDGKKVDQYKGKRDLESLREYVESQLQRTETGATETVTPSEAPVLAAEPEADKGTVLALTENNFDDTIAEGITFIKFYAPWCGHCKTLAPTWEELSKKEFPGLAGVKIAEVDCTAERNICSKYSVRGYPTLLLFRGGKKVSEHSGGRDLDSLHRFVLSQAKDEL</sequence>
<gene>
    <name evidence="9" type="primary">TXNDC5</name>
    <name type="synonym">TLP46</name>
    <name evidence="8" type="ORF">UNQ364/PRO700</name>
</gene>
<evidence type="ECO:0000250" key="1">
    <source>
        <dbReference type="UniProtKB" id="Q91W90"/>
    </source>
</evidence>
<evidence type="ECO:0000255" key="2"/>
<evidence type="ECO:0000255" key="3">
    <source>
        <dbReference type="PROSITE-ProRule" id="PRU00691"/>
    </source>
</evidence>
<evidence type="ECO:0000255" key="4">
    <source>
        <dbReference type="PROSITE-ProRule" id="PRU10138"/>
    </source>
</evidence>
<evidence type="ECO:0000256" key="5">
    <source>
        <dbReference type="SAM" id="MobiDB-lite"/>
    </source>
</evidence>
<evidence type="ECO:0000303" key="6">
    <source>
    </source>
</evidence>
<evidence type="ECO:0000305" key="7"/>
<evidence type="ECO:0000312" key="8">
    <source>
        <dbReference type="EMBL" id="AAQ89009.1"/>
    </source>
</evidence>
<evidence type="ECO:0000312" key="9">
    <source>
        <dbReference type="HGNC" id="HGNC:21073"/>
    </source>
</evidence>
<evidence type="ECO:0007829" key="10">
    <source>
        <dbReference type="PDB" id="3UVT"/>
    </source>
</evidence>
<evidence type="ECO:0007829" key="11">
    <source>
        <dbReference type="PDB" id="3WGD"/>
    </source>
</evidence>
<evidence type="ECO:0007829" key="12">
    <source>
        <dbReference type="PDB" id="3WGX"/>
    </source>
</evidence>
<dbReference type="EC" id="1.8.4.-" evidence="1"/>
<dbReference type="EC" id="5.3.4.1" evidence="1"/>
<dbReference type="EMBL" id="AY358646">
    <property type="protein sequence ID" value="AAQ89009.1"/>
    <property type="molecule type" value="mRNA"/>
</dbReference>
<dbReference type="EMBL" id="AK075291">
    <property type="protein sequence ID" value="BAC11526.1"/>
    <property type="molecule type" value="mRNA"/>
</dbReference>
<dbReference type="EMBL" id="AK315598">
    <property type="protein sequence ID" value="BAG37969.1"/>
    <property type="molecule type" value="mRNA"/>
</dbReference>
<dbReference type="EMBL" id="AL023694">
    <property type="status" value="NOT_ANNOTATED_CDS"/>
    <property type="molecule type" value="Genomic_DNA"/>
</dbReference>
<dbReference type="EMBL" id="AL096800">
    <property type="status" value="NOT_ANNOTATED_CDS"/>
    <property type="molecule type" value="Genomic_DNA"/>
</dbReference>
<dbReference type="EMBL" id="AL133541">
    <property type="status" value="NOT_ANNOTATED_CDS"/>
    <property type="molecule type" value="Genomic_DNA"/>
</dbReference>
<dbReference type="EMBL" id="CH471087">
    <property type="protein sequence ID" value="EAW55221.1"/>
    <property type="molecule type" value="Genomic_DNA"/>
</dbReference>
<dbReference type="EMBL" id="AJ440721">
    <property type="protein sequence ID" value="CAD29430.1"/>
    <property type="molecule type" value="mRNA"/>
</dbReference>
<dbReference type="EMBL" id="BC001199">
    <property type="protein sequence ID" value="AAH01199.1"/>
    <property type="status" value="ALT_INIT"/>
    <property type="molecule type" value="mRNA"/>
</dbReference>
<dbReference type="EMBL" id="AL834423">
    <property type="protein sequence ID" value="CAD39084.1"/>
    <property type="molecule type" value="mRNA"/>
</dbReference>
<dbReference type="CCDS" id="CCDS4505.1">
    <molecule id="Q8NBS9-1"/>
</dbReference>
<dbReference type="CCDS" id="CCDS47369.1">
    <molecule id="Q8NBS9-2"/>
</dbReference>
<dbReference type="RefSeq" id="NP_001139021.1">
    <molecule id="Q8NBS9-2"/>
    <property type="nucleotide sequence ID" value="NM_001145549.4"/>
</dbReference>
<dbReference type="RefSeq" id="NP_110437.2">
    <molecule id="Q8NBS9-1"/>
    <property type="nucleotide sequence ID" value="NM_030810.4"/>
</dbReference>
<dbReference type="PDB" id="2DIZ">
    <property type="method" value="NMR"/>
    <property type="chains" value="A=323-432"/>
</dbReference>
<dbReference type="PDB" id="3UJ1">
    <property type="method" value="X-ray"/>
    <property type="resolution" value="2.65 A"/>
    <property type="chains" value="A=323-432"/>
</dbReference>
<dbReference type="PDB" id="3UVT">
    <property type="method" value="X-ray"/>
    <property type="resolution" value="2.00 A"/>
    <property type="chains" value="A/B/C/D/E=323-428"/>
</dbReference>
<dbReference type="PDB" id="3WGD">
    <property type="method" value="X-ray"/>
    <property type="resolution" value="2.50 A"/>
    <property type="chains" value="A/B/C/D/E/F/G/H/I=62-170"/>
</dbReference>
<dbReference type="PDB" id="3WGE">
    <property type="method" value="X-ray"/>
    <property type="resolution" value="0.95 A"/>
    <property type="chains" value="A=190-298"/>
</dbReference>
<dbReference type="PDB" id="3WGX">
    <property type="method" value="X-ray"/>
    <property type="resolution" value="0.92 A"/>
    <property type="chains" value="A/B=190-298"/>
</dbReference>
<dbReference type="PDB" id="8EKY">
    <property type="method" value="EM"/>
    <property type="resolution" value="3.47 A"/>
    <property type="chains" value="M=1-432"/>
</dbReference>
<dbReference type="PDBsum" id="2DIZ"/>
<dbReference type="PDBsum" id="3UJ1"/>
<dbReference type="PDBsum" id="3UVT"/>
<dbReference type="PDBsum" id="3WGD"/>
<dbReference type="PDBsum" id="3WGE"/>
<dbReference type="PDBsum" id="3WGX"/>
<dbReference type="PDBsum" id="8EKY"/>
<dbReference type="EMDB" id="EMD-28217"/>
<dbReference type="SMR" id="Q8NBS9"/>
<dbReference type="BioGRID" id="123529">
    <property type="interactions" value="229"/>
</dbReference>
<dbReference type="DIP" id="DIP-53700N"/>
<dbReference type="FunCoup" id="Q8NBS9">
    <property type="interactions" value="1121"/>
</dbReference>
<dbReference type="IntAct" id="Q8NBS9">
    <property type="interactions" value="67"/>
</dbReference>
<dbReference type="MINT" id="Q8NBS9"/>
<dbReference type="STRING" id="9606.ENSP00000369081"/>
<dbReference type="BindingDB" id="Q8NBS9"/>
<dbReference type="ChEMBL" id="CHEMBL4739698"/>
<dbReference type="GlyCosmos" id="Q8NBS9">
    <property type="glycosylation" value="4 sites, 4 glycans"/>
</dbReference>
<dbReference type="GlyGen" id="Q8NBS9">
    <property type="glycosylation" value="11 sites, 6 O-linked glycans (10 sites)"/>
</dbReference>
<dbReference type="iPTMnet" id="Q8NBS9"/>
<dbReference type="MetOSite" id="Q8NBS9"/>
<dbReference type="PhosphoSitePlus" id="Q8NBS9"/>
<dbReference type="SwissPalm" id="Q8NBS9"/>
<dbReference type="BioMuta" id="TXNDC5"/>
<dbReference type="DMDM" id="29839560"/>
<dbReference type="jPOST" id="Q8NBS9"/>
<dbReference type="MassIVE" id="Q8NBS9"/>
<dbReference type="PaxDb" id="9606-ENSP00000369081"/>
<dbReference type="PeptideAtlas" id="Q8NBS9"/>
<dbReference type="ProteomicsDB" id="3428"/>
<dbReference type="ProteomicsDB" id="72817">
    <molecule id="Q8NBS9-1"/>
</dbReference>
<dbReference type="Pumba" id="Q8NBS9"/>
<dbReference type="Antibodypedia" id="34993">
    <property type="antibodies" value="556 antibodies from 34 providers"/>
</dbReference>
<dbReference type="DNASU" id="81567"/>
<dbReference type="Ensembl" id="ENST00000379757.9">
    <molecule id="Q8NBS9-1"/>
    <property type="protein sequence ID" value="ENSP00000369081.4"/>
    <property type="gene ID" value="ENSG00000239264.9"/>
</dbReference>
<dbReference type="Ensembl" id="ENST00000473453.2">
    <molecule id="Q8NBS9-2"/>
    <property type="protein sequence ID" value="ENSP00000420784.1"/>
    <property type="gene ID" value="ENSG00000239264.9"/>
</dbReference>
<dbReference type="GeneID" id="81567"/>
<dbReference type="KEGG" id="hsa:81567"/>
<dbReference type="MANE-Select" id="ENST00000379757.9">
    <property type="protein sequence ID" value="ENSP00000369081.4"/>
    <property type="RefSeq nucleotide sequence ID" value="NM_030810.5"/>
    <property type="RefSeq protein sequence ID" value="NP_110437.2"/>
</dbReference>
<dbReference type="UCSC" id="uc003mxv.4">
    <molecule id="Q8NBS9-1"/>
    <property type="organism name" value="human"/>
</dbReference>
<dbReference type="AGR" id="HGNC:21073"/>
<dbReference type="CTD" id="81567"/>
<dbReference type="DisGeNET" id="81567"/>
<dbReference type="GeneCards" id="TXNDC5"/>
<dbReference type="HGNC" id="HGNC:21073">
    <property type="gene designation" value="TXNDC5"/>
</dbReference>
<dbReference type="HPA" id="ENSG00000239264">
    <property type="expression patterns" value="Low tissue specificity"/>
</dbReference>
<dbReference type="MIM" id="616412">
    <property type="type" value="gene"/>
</dbReference>
<dbReference type="neXtProt" id="NX_Q8NBS9"/>
<dbReference type="OpenTargets" id="ENSG00000239264"/>
<dbReference type="PharmGKB" id="PA134992492"/>
<dbReference type="VEuPathDB" id="HostDB:ENSG00000239264"/>
<dbReference type="eggNOG" id="KOG0191">
    <property type="taxonomic scope" value="Eukaryota"/>
</dbReference>
<dbReference type="GeneTree" id="ENSGT00940000156920"/>
<dbReference type="HOGENOM" id="CLU_066321_0_0_1"/>
<dbReference type="InParanoid" id="Q8NBS9"/>
<dbReference type="OMA" id="TKHQTLC"/>
<dbReference type="OrthoDB" id="71336at2759"/>
<dbReference type="PAN-GO" id="Q8NBS9">
    <property type="GO annotations" value="3 GO annotations based on evolutionary models"/>
</dbReference>
<dbReference type="PhylomeDB" id="Q8NBS9"/>
<dbReference type="TreeFam" id="TF106379"/>
<dbReference type="BRENDA" id="5.3.4.1">
    <property type="organism ID" value="2681"/>
</dbReference>
<dbReference type="PathwayCommons" id="Q8NBS9"/>
<dbReference type="Reactome" id="R-HSA-432720">
    <property type="pathway name" value="Lysosome Vesicle Biogenesis"/>
</dbReference>
<dbReference type="Reactome" id="R-HSA-432722">
    <property type="pathway name" value="Golgi Associated Vesicle Biogenesis"/>
</dbReference>
<dbReference type="Reactome" id="R-HSA-6798695">
    <property type="pathway name" value="Neutrophil degranulation"/>
</dbReference>
<dbReference type="SignaLink" id="Q8NBS9"/>
<dbReference type="BioGRID-ORCS" id="81567">
    <property type="hits" value="9 hits in 1158 CRISPR screens"/>
</dbReference>
<dbReference type="EvolutionaryTrace" id="Q8NBS9"/>
<dbReference type="GeneWiki" id="TXNDC5"/>
<dbReference type="GenomeRNAi" id="81567"/>
<dbReference type="Pharos" id="Q8NBS9">
    <property type="development level" value="Tbio"/>
</dbReference>
<dbReference type="PRO" id="PR:Q8NBS9"/>
<dbReference type="Proteomes" id="UP000005640">
    <property type="component" value="Chromosome 6"/>
</dbReference>
<dbReference type="RNAct" id="Q8NBS9">
    <property type="molecule type" value="protein"/>
</dbReference>
<dbReference type="Bgee" id="ENSG00000239264">
    <property type="expression patterns" value="Expressed in duodenum and 103 other cell types or tissues"/>
</dbReference>
<dbReference type="ExpressionAtlas" id="Q8NBS9">
    <property type="expression patterns" value="baseline and differential"/>
</dbReference>
<dbReference type="GO" id="GO:0035578">
    <property type="term" value="C:azurophil granule lumen"/>
    <property type="evidence" value="ECO:0000304"/>
    <property type="project" value="Reactome"/>
</dbReference>
<dbReference type="GO" id="GO:0005783">
    <property type="term" value="C:endoplasmic reticulum"/>
    <property type="evidence" value="ECO:0000318"/>
    <property type="project" value="GO_Central"/>
</dbReference>
<dbReference type="GO" id="GO:0005788">
    <property type="term" value="C:endoplasmic reticulum lumen"/>
    <property type="evidence" value="ECO:0000250"/>
    <property type="project" value="UniProtKB"/>
</dbReference>
<dbReference type="GO" id="GO:0070062">
    <property type="term" value="C:extracellular exosome"/>
    <property type="evidence" value="ECO:0007005"/>
    <property type="project" value="UniProtKB"/>
</dbReference>
<dbReference type="GO" id="GO:0005576">
    <property type="term" value="C:extracellular region"/>
    <property type="evidence" value="ECO:0000304"/>
    <property type="project" value="Reactome"/>
</dbReference>
<dbReference type="GO" id="GO:0043202">
    <property type="term" value="C:lysosomal lumen"/>
    <property type="evidence" value="ECO:0000304"/>
    <property type="project" value="Reactome"/>
</dbReference>
<dbReference type="GO" id="GO:0003756">
    <property type="term" value="F:protein disulfide isomerase activity"/>
    <property type="evidence" value="ECO:0000250"/>
    <property type="project" value="UniProtKB"/>
</dbReference>
<dbReference type="GO" id="GO:0015035">
    <property type="term" value="F:protein-disulfide reductase activity"/>
    <property type="evidence" value="ECO:0000250"/>
    <property type="project" value="UniProtKB"/>
</dbReference>
<dbReference type="GO" id="GO:0043066">
    <property type="term" value="P:negative regulation of apoptotic process"/>
    <property type="evidence" value="ECO:0000304"/>
    <property type="project" value="UniProtKB"/>
</dbReference>
<dbReference type="GO" id="GO:0006457">
    <property type="term" value="P:protein folding"/>
    <property type="evidence" value="ECO:0000318"/>
    <property type="project" value="GO_Central"/>
</dbReference>
<dbReference type="CDD" id="cd03005">
    <property type="entry name" value="PDI_a_ERp46"/>
    <property type="match status" value="3"/>
</dbReference>
<dbReference type="FunFam" id="3.40.30.10:FF:000146">
    <property type="entry name" value="Thioredoxin domain containing 5"/>
    <property type="match status" value="1"/>
</dbReference>
<dbReference type="FunFam" id="3.40.30.10:FF:000164">
    <property type="entry name" value="Thioredoxin domain containing 5"/>
    <property type="match status" value="1"/>
</dbReference>
<dbReference type="FunFam" id="3.40.30.10:FF:000147">
    <property type="entry name" value="Thioredoxin domain-containing protein 5"/>
    <property type="match status" value="1"/>
</dbReference>
<dbReference type="Gene3D" id="3.40.30.10">
    <property type="entry name" value="Glutaredoxin"/>
    <property type="match status" value="3"/>
</dbReference>
<dbReference type="InterPro" id="IPR051063">
    <property type="entry name" value="PDI"/>
</dbReference>
<dbReference type="InterPro" id="IPR005788">
    <property type="entry name" value="PDI_thioredoxin-like_dom"/>
</dbReference>
<dbReference type="InterPro" id="IPR036249">
    <property type="entry name" value="Thioredoxin-like_sf"/>
</dbReference>
<dbReference type="InterPro" id="IPR017937">
    <property type="entry name" value="Thioredoxin_CS"/>
</dbReference>
<dbReference type="InterPro" id="IPR013766">
    <property type="entry name" value="Thioredoxin_domain"/>
</dbReference>
<dbReference type="NCBIfam" id="TIGR01126">
    <property type="entry name" value="pdi_dom"/>
    <property type="match status" value="1"/>
</dbReference>
<dbReference type="PANTHER" id="PTHR45672">
    <property type="entry name" value="PROTEIN DISULFIDE-ISOMERASE C17H9.14C-RELATED"/>
    <property type="match status" value="1"/>
</dbReference>
<dbReference type="PANTHER" id="PTHR45672:SF3">
    <property type="entry name" value="THIOREDOXIN DOMAIN-CONTAINING PROTEIN 5"/>
    <property type="match status" value="1"/>
</dbReference>
<dbReference type="Pfam" id="PF00085">
    <property type="entry name" value="Thioredoxin"/>
    <property type="match status" value="3"/>
</dbReference>
<dbReference type="PRINTS" id="PR00421">
    <property type="entry name" value="THIOREDOXIN"/>
</dbReference>
<dbReference type="SUPFAM" id="SSF52833">
    <property type="entry name" value="Thioredoxin-like"/>
    <property type="match status" value="3"/>
</dbReference>
<dbReference type="PROSITE" id="PS00014">
    <property type="entry name" value="ER_TARGET"/>
    <property type="match status" value="1"/>
</dbReference>
<dbReference type="PROSITE" id="PS00194">
    <property type="entry name" value="THIOREDOXIN_1"/>
    <property type="match status" value="3"/>
</dbReference>
<dbReference type="PROSITE" id="PS51352">
    <property type="entry name" value="THIOREDOXIN_2"/>
    <property type="match status" value="3"/>
</dbReference>
<feature type="signal peptide" evidence="2">
    <location>
        <begin position="1"/>
        <end position="32"/>
    </location>
</feature>
<feature type="chain" id="PRO_0000034183" description="Thioredoxin domain-containing protein 5">
    <location>
        <begin position="33"/>
        <end position="432"/>
    </location>
</feature>
<feature type="domain" description="Thioredoxin 1" evidence="3">
    <location>
        <begin position="36"/>
        <end position="169"/>
    </location>
</feature>
<feature type="domain" description="Thioredoxin 2" evidence="3">
    <location>
        <begin position="170"/>
        <end position="295"/>
    </location>
</feature>
<feature type="domain" description="Thioredoxin 3" evidence="3">
    <location>
        <begin position="304"/>
        <end position="429"/>
    </location>
</feature>
<feature type="region of interest" description="Disordered" evidence="5">
    <location>
        <begin position="40"/>
        <end position="63"/>
    </location>
</feature>
<feature type="short sequence motif" description="Prevents secretion from ER" evidence="4">
    <location>
        <begin position="429"/>
        <end position="432"/>
    </location>
</feature>
<feature type="compositionally biased region" description="Low complexity" evidence="5">
    <location>
        <begin position="40"/>
        <end position="52"/>
    </location>
</feature>
<feature type="disulfide bond" description="Redox-active" evidence="3">
    <location>
        <begin position="89"/>
        <end position="92"/>
    </location>
</feature>
<feature type="disulfide bond" description="Redox-active" evidence="3">
    <location>
        <begin position="217"/>
        <end position="220"/>
    </location>
</feature>
<feature type="disulfide bond" description="Redox-active" evidence="3">
    <location>
        <begin position="350"/>
        <end position="353"/>
    </location>
</feature>
<feature type="splice variant" id="VSP_045181" description="In isoform 2." evidence="6">
    <location>
        <begin position="1"/>
        <end position="108"/>
    </location>
</feature>
<feature type="sequence conflict" description="In Ref. 2; BAC11526." evidence="7" ref="2">
    <original>K</original>
    <variation>R</variation>
    <location>
        <position position="354"/>
    </location>
</feature>
<feature type="helix" evidence="11">
    <location>
        <begin position="68"/>
        <end position="77"/>
    </location>
</feature>
<feature type="strand" evidence="11">
    <location>
        <begin position="78"/>
        <end position="85"/>
    </location>
</feature>
<feature type="helix" evidence="11">
    <location>
        <begin position="90"/>
        <end position="106"/>
    </location>
</feature>
<feature type="strand" evidence="11">
    <location>
        <begin position="113"/>
        <end position="120"/>
    </location>
</feature>
<feature type="turn" evidence="11">
    <location>
        <begin position="121"/>
        <end position="123"/>
    </location>
</feature>
<feature type="helix" evidence="11">
    <location>
        <begin position="125"/>
        <end position="130"/>
    </location>
</feature>
<feature type="strand" evidence="11">
    <location>
        <begin position="135"/>
        <end position="142"/>
    </location>
</feature>
<feature type="strand" evidence="11">
    <location>
        <begin position="149"/>
        <end position="151"/>
    </location>
</feature>
<feature type="helix" evidence="11">
    <location>
        <begin position="157"/>
        <end position="168"/>
    </location>
</feature>
<feature type="strand" evidence="12">
    <location>
        <begin position="191"/>
        <end position="194"/>
    </location>
</feature>
<feature type="turn" evidence="12">
    <location>
        <begin position="196"/>
        <end position="198"/>
    </location>
</feature>
<feature type="helix" evidence="12">
    <location>
        <begin position="199"/>
        <end position="203"/>
    </location>
</feature>
<feature type="strand" evidence="12">
    <location>
        <begin position="204"/>
        <end position="213"/>
    </location>
</feature>
<feature type="helix" evidence="12">
    <location>
        <begin position="218"/>
        <end position="233"/>
    </location>
</feature>
<feature type="turn" evidence="12">
    <location>
        <begin position="234"/>
        <end position="236"/>
    </location>
</feature>
<feature type="strand" evidence="12">
    <location>
        <begin position="238"/>
        <end position="246"/>
    </location>
</feature>
<feature type="turn" evidence="12">
    <location>
        <begin position="247"/>
        <end position="249"/>
    </location>
</feature>
<feature type="helix" evidence="12">
    <location>
        <begin position="251"/>
        <end position="256"/>
    </location>
</feature>
<feature type="strand" evidence="12">
    <location>
        <begin position="261"/>
        <end position="269"/>
    </location>
</feature>
<feature type="strand" evidence="12">
    <location>
        <begin position="272"/>
        <end position="276"/>
    </location>
</feature>
<feature type="helix" evidence="12">
    <location>
        <begin position="283"/>
        <end position="294"/>
    </location>
</feature>
<feature type="strand" evidence="10">
    <location>
        <begin position="324"/>
        <end position="326"/>
    </location>
</feature>
<feature type="turn" evidence="10">
    <location>
        <begin position="329"/>
        <end position="331"/>
    </location>
</feature>
<feature type="helix" evidence="10">
    <location>
        <begin position="332"/>
        <end position="336"/>
    </location>
</feature>
<feature type="strand" evidence="10">
    <location>
        <begin position="337"/>
        <end position="346"/>
    </location>
</feature>
<feature type="helix" evidence="10">
    <location>
        <begin position="351"/>
        <end position="364"/>
    </location>
</feature>
<feature type="strand" evidence="10">
    <location>
        <begin position="374"/>
        <end position="380"/>
    </location>
</feature>
<feature type="turn" evidence="10">
    <location>
        <begin position="381"/>
        <end position="383"/>
    </location>
</feature>
<feature type="helix" evidence="10">
    <location>
        <begin position="385"/>
        <end position="390"/>
    </location>
</feature>
<feature type="strand" evidence="10">
    <location>
        <begin position="395"/>
        <end position="403"/>
    </location>
</feature>
<feature type="strand" evidence="10">
    <location>
        <begin position="406"/>
        <end position="411"/>
    </location>
</feature>
<feature type="helix" evidence="10">
    <location>
        <begin position="417"/>
        <end position="427"/>
    </location>
</feature>
<comment type="function">
    <text evidence="1">Protein disulfide isomerase of the endoplasmic reticulum lumen involved in the formation of disulfide bonds in proteins. Can reduce insulin disulfide bonds.</text>
</comment>
<comment type="catalytic activity">
    <reaction evidence="1">
        <text>Catalyzes the rearrangement of -S-S- bonds in proteins.</text>
        <dbReference type="EC" id="5.3.4.1"/>
    </reaction>
</comment>
<comment type="interaction">
    <interactant intactId="EBI-2510815">
        <id>Q8NBS9</id>
    </interactant>
    <interactant intactId="EBI-2211957">
        <id>Q13162</id>
        <label>PRDX4</label>
    </interactant>
    <organismsDiffer>false</organismsDiffer>
    <experiments>2</experiments>
</comment>
<comment type="interaction">
    <interactant intactId="EBI-2510815">
        <id>Q8NBS9</id>
    </interactant>
    <interactant intactId="EBI-947187">
        <id>Q9UHD9</id>
        <label>UBQLN2</label>
    </interactant>
    <organismsDiffer>false</organismsDiffer>
    <experiments>3</experiments>
</comment>
<comment type="interaction">
    <interactant intactId="EBI-16091651">
        <id>Q8NBS9-1</id>
    </interactant>
    <interactant intactId="EBI-494652">
        <id>O08807</id>
        <label>Prdx4</label>
    </interactant>
    <organismsDiffer>true</organismsDiffer>
    <experiments>2</experiments>
</comment>
<comment type="subcellular location">
    <subcellularLocation>
        <location evidence="1 4">Endoplasmic reticulum lumen</location>
    </subcellularLocation>
</comment>
<comment type="alternative products">
    <event type="alternative splicing"/>
    <isoform>
        <id>Q8NBS9-1</id>
        <name>1</name>
        <sequence type="displayed"/>
    </isoform>
    <isoform>
        <id>Q8NBS9-2</id>
        <name>2</name>
        <sequence type="described" ref="VSP_045181"/>
    </isoform>
</comment>
<comment type="similarity">
    <text evidence="7">Belongs to the protein disulfide isomerase family.</text>
</comment>
<comment type="sequence caution" evidence="7">
    <conflict type="erroneous initiation">
        <sequence resource="EMBL-CDS" id="AAH01199"/>
    </conflict>
</comment>